<reference key="1">
    <citation type="journal article" date="2009" name="Genome Res.">
        <title>Newly introduced genomic prophage islands are critical determinants of in vivo competitiveness in the Liverpool epidemic strain of Pseudomonas aeruginosa.</title>
        <authorList>
            <person name="Winstanley C."/>
            <person name="Langille M.G.I."/>
            <person name="Fothergill J.L."/>
            <person name="Kukavica-Ibrulj I."/>
            <person name="Paradis-Bleau C."/>
            <person name="Sanschagrin F."/>
            <person name="Thomson N.R."/>
            <person name="Winsor G.L."/>
            <person name="Quail M.A."/>
            <person name="Lennard N."/>
            <person name="Bignell A."/>
            <person name="Clarke L."/>
            <person name="Seeger K."/>
            <person name="Saunders D."/>
            <person name="Harris D."/>
            <person name="Parkhill J."/>
            <person name="Hancock R.E.W."/>
            <person name="Brinkman F.S.L."/>
            <person name="Levesque R.C."/>
        </authorList>
    </citation>
    <scope>NUCLEOTIDE SEQUENCE [LARGE SCALE GENOMIC DNA]</scope>
    <source>
        <strain>LESB58</strain>
    </source>
</reference>
<keyword id="KW-0028">Amino-acid biosynthesis</keyword>
<keyword id="KW-0368">Histidine biosynthesis</keyword>
<keyword id="KW-0378">Hydrolase</keyword>
<keyword id="KW-0486">Methionine biosynthesis</keyword>
<keyword id="KW-0511">Multifunctional enzyme</keyword>
<keyword id="KW-0521">NADP</keyword>
<keyword id="KW-0554">One-carbon metabolism</keyword>
<keyword id="KW-0560">Oxidoreductase</keyword>
<keyword id="KW-0658">Purine biosynthesis</keyword>
<organism>
    <name type="scientific">Pseudomonas aeruginosa (strain LESB58)</name>
    <dbReference type="NCBI Taxonomy" id="557722"/>
    <lineage>
        <taxon>Bacteria</taxon>
        <taxon>Pseudomonadati</taxon>
        <taxon>Pseudomonadota</taxon>
        <taxon>Gammaproteobacteria</taxon>
        <taxon>Pseudomonadales</taxon>
        <taxon>Pseudomonadaceae</taxon>
        <taxon>Pseudomonas</taxon>
    </lineage>
</organism>
<accession>B7VB83</accession>
<sequence>MTAQLIDGKAIAANLRQQIAQRVTERRQQGLRVPGLAVILVGTDPASQVYVAHKRKDCEEVGFLSQAYDLPAETSQDDLLALIDRLNDDPAIDGILVQLPLPAHLDASLLLERIHPDKDVDGFHPYNIGRLAQRMPLLRPCTPKGIMTLLASTGADLYGMDAVVVGASNIVGRPMALELLLGGCTVTVTHRFTRDLADHVSRADLVVVAAGKPGLVKGEWIKEGAIVIDVGINRQADGRLVGDVEYEVAAQRASWITPVPGGVGPMTRACLLENTLHAAEHLHD</sequence>
<protein>
    <recommendedName>
        <fullName evidence="1">Bifunctional protein FolD</fullName>
    </recommendedName>
    <domain>
        <recommendedName>
            <fullName evidence="1">Methylenetetrahydrofolate dehydrogenase</fullName>
            <ecNumber evidence="1">1.5.1.5</ecNumber>
        </recommendedName>
    </domain>
    <domain>
        <recommendedName>
            <fullName evidence="1">Methenyltetrahydrofolate cyclohydrolase</fullName>
            <ecNumber evidence="1">3.5.4.9</ecNumber>
        </recommendedName>
    </domain>
</protein>
<feature type="chain" id="PRO_1000147511" description="Bifunctional protein FolD">
    <location>
        <begin position="1"/>
        <end position="284"/>
    </location>
</feature>
<feature type="binding site" evidence="1">
    <location>
        <begin position="166"/>
        <end position="168"/>
    </location>
    <ligand>
        <name>NADP(+)</name>
        <dbReference type="ChEBI" id="CHEBI:58349"/>
    </ligand>
</feature>
<feature type="binding site" evidence="1">
    <location>
        <position position="232"/>
    </location>
    <ligand>
        <name>NADP(+)</name>
        <dbReference type="ChEBI" id="CHEBI:58349"/>
    </ligand>
</feature>
<proteinExistence type="inferred from homology"/>
<name>FOLD_PSEA8</name>
<dbReference type="EC" id="1.5.1.5" evidence="1"/>
<dbReference type="EC" id="3.5.4.9" evidence="1"/>
<dbReference type="EMBL" id="FM209186">
    <property type="protein sequence ID" value="CAW28260.1"/>
    <property type="molecule type" value="Genomic_DNA"/>
</dbReference>
<dbReference type="RefSeq" id="WP_003087898.1">
    <property type="nucleotide sequence ID" value="NC_011770.1"/>
</dbReference>
<dbReference type="SMR" id="B7VB83"/>
<dbReference type="KEGG" id="pag:PLES_35331"/>
<dbReference type="HOGENOM" id="CLU_034045_2_1_6"/>
<dbReference type="UniPathway" id="UPA00193"/>
<dbReference type="GO" id="GO:0005829">
    <property type="term" value="C:cytosol"/>
    <property type="evidence" value="ECO:0007669"/>
    <property type="project" value="TreeGrafter"/>
</dbReference>
<dbReference type="GO" id="GO:0004477">
    <property type="term" value="F:methenyltetrahydrofolate cyclohydrolase activity"/>
    <property type="evidence" value="ECO:0007669"/>
    <property type="project" value="UniProtKB-UniRule"/>
</dbReference>
<dbReference type="GO" id="GO:0004488">
    <property type="term" value="F:methylenetetrahydrofolate dehydrogenase (NADP+) activity"/>
    <property type="evidence" value="ECO:0007669"/>
    <property type="project" value="UniProtKB-UniRule"/>
</dbReference>
<dbReference type="GO" id="GO:0000105">
    <property type="term" value="P:L-histidine biosynthetic process"/>
    <property type="evidence" value="ECO:0007669"/>
    <property type="project" value="UniProtKB-KW"/>
</dbReference>
<dbReference type="GO" id="GO:0009086">
    <property type="term" value="P:methionine biosynthetic process"/>
    <property type="evidence" value="ECO:0007669"/>
    <property type="project" value="UniProtKB-KW"/>
</dbReference>
<dbReference type="GO" id="GO:0006164">
    <property type="term" value="P:purine nucleotide biosynthetic process"/>
    <property type="evidence" value="ECO:0007669"/>
    <property type="project" value="UniProtKB-KW"/>
</dbReference>
<dbReference type="GO" id="GO:0035999">
    <property type="term" value="P:tetrahydrofolate interconversion"/>
    <property type="evidence" value="ECO:0007669"/>
    <property type="project" value="UniProtKB-UniRule"/>
</dbReference>
<dbReference type="CDD" id="cd01080">
    <property type="entry name" value="NAD_bind_m-THF_DH_Cyclohyd"/>
    <property type="match status" value="1"/>
</dbReference>
<dbReference type="FunFam" id="3.40.50.10860:FF:000001">
    <property type="entry name" value="Bifunctional protein FolD"/>
    <property type="match status" value="1"/>
</dbReference>
<dbReference type="FunFam" id="3.40.50.720:FF:000006">
    <property type="entry name" value="Bifunctional protein FolD"/>
    <property type="match status" value="1"/>
</dbReference>
<dbReference type="Gene3D" id="3.40.50.10860">
    <property type="entry name" value="Leucine Dehydrogenase, chain A, domain 1"/>
    <property type="match status" value="1"/>
</dbReference>
<dbReference type="Gene3D" id="3.40.50.720">
    <property type="entry name" value="NAD(P)-binding Rossmann-like Domain"/>
    <property type="match status" value="1"/>
</dbReference>
<dbReference type="HAMAP" id="MF_01576">
    <property type="entry name" value="THF_DHG_CYH"/>
    <property type="match status" value="1"/>
</dbReference>
<dbReference type="InterPro" id="IPR046346">
    <property type="entry name" value="Aminoacid_DH-like_N_sf"/>
</dbReference>
<dbReference type="InterPro" id="IPR036291">
    <property type="entry name" value="NAD(P)-bd_dom_sf"/>
</dbReference>
<dbReference type="InterPro" id="IPR000672">
    <property type="entry name" value="THF_DH/CycHdrlase"/>
</dbReference>
<dbReference type="InterPro" id="IPR020630">
    <property type="entry name" value="THF_DH/CycHdrlase_cat_dom"/>
</dbReference>
<dbReference type="InterPro" id="IPR020867">
    <property type="entry name" value="THF_DH/CycHdrlase_CS"/>
</dbReference>
<dbReference type="InterPro" id="IPR020631">
    <property type="entry name" value="THF_DH/CycHdrlase_NAD-bd_dom"/>
</dbReference>
<dbReference type="NCBIfam" id="NF008058">
    <property type="entry name" value="PRK10792.1"/>
    <property type="match status" value="1"/>
</dbReference>
<dbReference type="NCBIfam" id="NF010783">
    <property type="entry name" value="PRK14186.1"/>
    <property type="match status" value="1"/>
</dbReference>
<dbReference type="PANTHER" id="PTHR48099:SF5">
    <property type="entry name" value="C-1-TETRAHYDROFOLATE SYNTHASE, CYTOPLASMIC"/>
    <property type="match status" value="1"/>
</dbReference>
<dbReference type="PANTHER" id="PTHR48099">
    <property type="entry name" value="C-1-TETRAHYDROFOLATE SYNTHASE, CYTOPLASMIC-RELATED"/>
    <property type="match status" value="1"/>
</dbReference>
<dbReference type="Pfam" id="PF00763">
    <property type="entry name" value="THF_DHG_CYH"/>
    <property type="match status" value="1"/>
</dbReference>
<dbReference type="Pfam" id="PF02882">
    <property type="entry name" value="THF_DHG_CYH_C"/>
    <property type="match status" value="1"/>
</dbReference>
<dbReference type="PRINTS" id="PR00085">
    <property type="entry name" value="THFDHDRGNASE"/>
</dbReference>
<dbReference type="SUPFAM" id="SSF53223">
    <property type="entry name" value="Aminoacid dehydrogenase-like, N-terminal domain"/>
    <property type="match status" value="1"/>
</dbReference>
<dbReference type="SUPFAM" id="SSF51735">
    <property type="entry name" value="NAD(P)-binding Rossmann-fold domains"/>
    <property type="match status" value="1"/>
</dbReference>
<dbReference type="PROSITE" id="PS00766">
    <property type="entry name" value="THF_DHG_CYH_1"/>
    <property type="match status" value="1"/>
</dbReference>
<evidence type="ECO:0000255" key="1">
    <source>
        <dbReference type="HAMAP-Rule" id="MF_01576"/>
    </source>
</evidence>
<comment type="function">
    <text evidence="1">Catalyzes the oxidation of 5,10-methylenetetrahydrofolate to 5,10-methenyltetrahydrofolate and then the hydrolysis of 5,10-methenyltetrahydrofolate to 10-formyltetrahydrofolate.</text>
</comment>
<comment type="catalytic activity">
    <reaction evidence="1">
        <text>(6R)-5,10-methylene-5,6,7,8-tetrahydrofolate + NADP(+) = (6R)-5,10-methenyltetrahydrofolate + NADPH</text>
        <dbReference type="Rhea" id="RHEA:22812"/>
        <dbReference type="ChEBI" id="CHEBI:15636"/>
        <dbReference type="ChEBI" id="CHEBI:57455"/>
        <dbReference type="ChEBI" id="CHEBI:57783"/>
        <dbReference type="ChEBI" id="CHEBI:58349"/>
        <dbReference type="EC" id="1.5.1.5"/>
    </reaction>
</comment>
<comment type="catalytic activity">
    <reaction evidence="1">
        <text>(6R)-5,10-methenyltetrahydrofolate + H2O = (6R)-10-formyltetrahydrofolate + H(+)</text>
        <dbReference type="Rhea" id="RHEA:23700"/>
        <dbReference type="ChEBI" id="CHEBI:15377"/>
        <dbReference type="ChEBI" id="CHEBI:15378"/>
        <dbReference type="ChEBI" id="CHEBI:57455"/>
        <dbReference type="ChEBI" id="CHEBI:195366"/>
        <dbReference type="EC" id="3.5.4.9"/>
    </reaction>
</comment>
<comment type="pathway">
    <text evidence="1">One-carbon metabolism; tetrahydrofolate interconversion.</text>
</comment>
<comment type="subunit">
    <text evidence="1">Homodimer.</text>
</comment>
<comment type="similarity">
    <text evidence="1">Belongs to the tetrahydrofolate dehydrogenase/cyclohydrolase family.</text>
</comment>
<gene>
    <name evidence="1" type="primary">folD</name>
    <name type="ordered locus">PLES_35331</name>
</gene>